<comment type="function">
    <text evidence="1">One of the primary rRNA binding proteins. Required for association of the 30S and 50S subunits to form the 70S ribosome, for tRNA binding and peptide bond formation. It has been suggested to have peptidyltransferase activity; this is somewhat controversial. Makes several contacts with the 16S rRNA in the 70S ribosome.</text>
</comment>
<comment type="subunit">
    <text evidence="1">Part of the 50S ribosomal subunit. Forms a bridge to the 30S subunit in the 70S ribosome.</text>
</comment>
<comment type="similarity">
    <text evidence="1">Belongs to the universal ribosomal protein uL2 family.</text>
</comment>
<proteinExistence type="inferred from homology"/>
<organism>
    <name type="scientific">Nautilia profundicola (strain ATCC BAA-1463 / DSM 18972 / AmH)</name>
    <dbReference type="NCBI Taxonomy" id="598659"/>
    <lineage>
        <taxon>Bacteria</taxon>
        <taxon>Pseudomonadati</taxon>
        <taxon>Campylobacterota</taxon>
        <taxon>Epsilonproteobacteria</taxon>
        <taxon>Nautiliales</taxon>
        <taxon>Nautiliaceae</taxon>
        <taxon>Nautilia</taxon>
    </lineage>
</organism>
<dbReference type="EMBL" id="CP001279">
    <property type="protein sequence ID" value="ACM92608.1"/>
    <property type="molecule type" value="Genomic_DNA"/>
</dbReference>
<dbReference type="RefSeq" id="WP_012663979.1">
    <property type="nucleotide sequence ID" value="NC_012115.1"/>
</dbReference>
<dbReference type="SMR" id="B9L6N0"/>
<dbReference type="STRING" id="598659.NAMH_1638"/>
<dbReference type="KEGG" id="nam:NAMH_1638"/>
<dbReference type="eggNOG" id="COG0090">
    <property type="taxonomic scope" value="Bacteria"/>
</dbReference>
<dbReference type="HOGENOM" id="CLU_036235_2_1_7"/>
<dbReference type="OrthoDB" id="9778722at2"/>
<dbReference type="Proteomes" id="UP000000448">
    <property type="component" value="Chromosome"/>
</dbReference>
<dbReference type="GO" id="GO:0015934">
    <property type="term" value="C:large ribosomal subunit"/>
    <property type="evidence" value="ECO:0007669"/>
    <property type="project" value="InterPro"/>
</dbReference>
<dbReference type="GO" id="GO:0019843">
    <property type="term" value="F:rRNA binding"/>
    <property type="evidence" value="ECO:0007669"/>
    <property type="project" value="UniProtKB-UniRule"/>
</dbReference>
<dbReference type="GO" id="GO:0003735">
    <property type="term" value="F:structural constituent of ribosome"/>
    <property type="evidence" value="ECO:0007669"/>
    <property type="project" value="InterPro"/>
</dbReference>
<dbReference type="GO" id="GO:0016740">
    <property type="term" value="F:transferase activity"/>
    <property type="evidence" value="ECO:0007669"/>
    <property type="project" value="InterPro"/>
</dbReference>
<dbReference type="GO" id="GO:0002181">
    <property type="term" value="P:cytoplasmic translation"/>
    <property type="evidence" value="ECO:0007669"/>
    <property type="project" value="TreeGrafter"/>
</dbReference>
<dbReference type="FunFam" id="2.30.30.30:FF:000001">
    <property type="entry name" value="50S ribosomal protein L2"/>
    <property type="match status" value="1"/>
</dbReference>
<dbReference type="FunFam" id="2.40.50.140:FF:000003">
    <property type="entry name" value="50S ribosomal protein L2"/>
    <property type="match status" value="1"/>
</dbReference>
<dbReference type="FunFam" id="4.10.950.10:FF:000001">
    <property type="entry name" value="50S ribosomal protein L2"/>
    <property type="match status" value="1"/>
</dbReference>
<dbReference type="Gene3D" id="2.30.30.30">
    <property type="match status" value="1"/>
</dbReference>
<dbReference type="Gene3D" id="2.40.50.140">
    <property type="entry name" value="Nucleic acid-binding proteins"/>
    <property type="match status" value="1"/>
</dbReference>
<dbReference type="Gene3D" id="4.10.950.10">
    <property type="entry name" value="Ribosomal protein L2, domain 3"/>
    <property type="match status" value="1"/>
</dbReference>
<dbReference type="HAMAP" id="MF_01320_B">
    <property type="entry name" value="Ribosomal_uL2_B"/>
    <property type="match status" value="1"/>
</dbReference>
<dbReference type="InterPro" id="IPR012340">
    <property type="entry name" value="NA-bd_OB-fold"/>
</dbReference>
<dbReference type="InterPro" id="IPR014722">
    <property type="entry name" value="Rib_uL2_dom2"/>
</dbReference>
<dbReference type="InterPro" id="IPR002171">
    <property type="entry name" value="Ribosomal_uL2"/>
</dbReference>
<dbReference type="InterPro" id="IPR005880">
    <property type="entry name" value="Ribosomal_uL2_bac/org-type"/>
</dbReference>
<dbReference type="InterPro" id="IPR022669">
    <property type="entry name" value="Ribosomal_uL2_C"/>
</dbReference>
<dbReference type="InterPro" id="IPR022671">
    <property type="entry name" value="Ribosomal_uL2_CS"/>
</dbReference>
<dbReference type="InterPro" id="IPR014726">
    <property type="entry name" value="Ribosomal_uL2_dom3"/>
</dbReference>
<dbReference type="InterPro" id="IPR022666">
    <property type="entry name" value="Ribosomal_uL2_RNA-bd_dom"/>
</dbReference>
<dbReference type="InterPro" id="IPR008991">
    <property type="entry name" value="Translation_prot_SH3-like_sf"/>
</dbReference>
<dbReference type="NCBIfam" id="TIGR01171">
    <property type="entry name" value="rplB_bact"/>
    <property type="match status" value="1"/>
</dbReference>
<dbReference type="PANTHER" id="PTHR13691:SF5">
    <property type="entry name" value="LARGE RIBOSOMAL SUBUNIT PROTEIN UL2M"/>
    <property type="match status" value="1"/>
</dbReference>
<dbReference type="PANTHER" id="PTHR13691">
    <property type="entry name" value="RIBOSOMAL PROTEIN L2"/>
    <property type="match status" value="1"/>
</dbReference>
<dbReference type="Pfam" id="PF00181">
    <property type="entry name" value="Ribosomal_L2"/>
    <property type="match status" value="1"/>
</dbReference>
<dbReference type="Pfam" id="PF03947">
    <property type="entry name" value="Ribosomal_L2_C"/>
    <property type="match status" value="1"/>
</dbReference>
<dbReference type="PIRSF" id="PIRSF002158">
    <property type="entry name" value="Ribosomal_L2"/>
    <property type="match status" value="1"/>
</dbReference>
<dbReference type="SMART" id="SM01383">
    <property type="entry name" value="Ribosomal_L2"/>
    <property type="match status" value="1"/>
</dbReference>
<dbReference type="SMART" id="SM01382">
    <property type="entry name" value="Ribosomal_L2_C"/>
    <property type="match status" value="1"/>
</dbReference>
<dbReference type="SUPFAM" id="SSF50249">
    <property type="entry name" value="Nucleic acid-binding proteins"/>
    <property type="match status" value="1"/>
</dbReference>
<dbReference type="SUPFAM" id="SSF50104">
    <property type="entry name" value="Translation proteins SH3-like domain"/>
    <property type="match status" value="1"/>
</dbReference>
<dbReference type="PROSITE" id="PS00467">
    <property type="entry name" value="RIBOSOMAL_L2"/>
    <property type="match status" value="1"/>
</dbReference>
<keyword id="KW-0687">Ribonucleoprotein</keyword>
<keyword id="KW-0689">Ribosomal protein</keyword>
<keyword id="KW-0694">RNA-binding</keyword>
<keyword id="KW-0699">rRNA-binding</keyword>
<accession>B9L6N0</accession>
<reference key="1">
    <citation type="journal article" date="2009" name="PLoS Genet.">
        <title>Adaptations to submarine hydrothermal environments exemplified by the genome of Nautilia profundicola.</title>
        <authorList>
            <person name="Campbell B.J."/>
            <person name="Smith J.L."/>
            <person name="Hanson T.E."/>
            <person name="Klotz M.G."/>
            <person name="Stein L.Y."/>
            <person name="Lee C.K."/>
            <person name="Wu D."/>
            <person name="Robinson J.M."/>
            <person name="Khouri H.M."/>
            <person name="Eisen J.A."/>
            <person name="Cary S.C."/>
        </authorList>
    </citation>
    <scope>NUCLEOTIDE SEQUENCE [LARGE SCALE GENOMIC DNA]</scope>
    <source>
        <strain>ATCC BAA-1463 / DSM 18972 / AmH</strain>
    </source>
</reference>
<gene>
    <name evidence="1" type="primary">rplB</name>
    <name type="ordered locus">NAMH_1638</name>
</gene>
<name>RL2_NAUPA</name>
<protein>
    <recommendedName>
        <fullName evidence="1">Large ribosomal subunit protein uL2</fullName>
    </recommendedName>
    <alternativeName>
        <fullName evidence="3">50S ribosomal protein L2</fullName>
    </alternativeName>
</protein>
<sequence>MAVKSYKPYTPSRRFMTTLDNSDITSKPTVKKLLIKLPQKAGRNNLGRITSRHREAGAKKLYRIIDFKRNKFGVPGKVATVEYDPYRNCRICLISYVDGDKRYIIQPEGLKVGDTVMAAEAGLDIKPGNAMKLKNIPVGTVVHNVEMKPGKGGQIARSAGNSCQIMGREGKYVILRLPSGEMRYILGECMATIGTVGNAEYQNITIGKAGRSRHLGIRPQTRGIAMNPVDHPHGGGEGRSKGNHPVTPWGMPTKGYKTRKKKQSDKYIISRRKK</sequence>
<feature type="chain" id="PRO_1000165762" description="Large ribosomal subunit protein uL2">
    <location>
        <begin position="1"/>
        <end position="274"/>
    </location>
</feature>
<feature type="region of interest" description="Disordered" evidence="2">
    <location>
        <begin position="223"/>
        <end position="274"/>
    </location>
</feature>
<feature type="compositionally biased region" description="Basic and acidic residues" evidence="2">
    <location>
        <begin position="230"/>
        <end position="240"/>
    </location>
</feature>
<feature type="compositionally biased region" description="Basic residues" evidence="2">
    <location>
        <begin position="256"/>
        <end position="274"/>
    </location>
</feature>
<evidence type="ECO:0000255" key="1">
    <source>
        <dbReference type="HAMAP-Rule" id="MF_01320"/>
    </source>
</evidence>
<evidence type="ECO:0000256" key="2">
    <source>
        <dbReference type="SAM" id="MobiDB-lite"/>
    </source>
</evidence>
<evidence type="ECO:0000305" key="3"/>